<comment type="function">
    <text evidence="1">Adenosine deaminase that may contribute to the degradation of extracellular adenosine, a signaling molecule that controls a variety of cellular responses. Requires elevated adenosine levels for optimal enzyme activity. Binds to cell surfaces via proteoglycans and may play a role in the regulation of cell proliferation and differentiation, independently of its enzyme activity (By similarity).</text>
</comment>
<comment type="catalytic activity">
    <reaction>
        <text>adenosine + H2O + H(+) = inosine + NH4(+)</text>
        <dbReference type="Rhea" id="RHEA:24408"/>
        <dbReference type="ChEBI" id="CHEBI:15377"/>
        <dbReference type="ChEBI" id="CHEBI:15378"/>
        <dbReference type="ChEBI" id="CHEBI:16335"/>
        <dbReference type="ChEBI" id="CHEBI:17596"/>
        <dbReference type="ChEBI" id="CHEBI:28938"/>
        <dbReference type="EC" id="3.5.4.4"/>
    </reaction>
</comment>
<comment type="cofactor">
    <cofactor evidence="1">
        <name>Zn(2+)</name>
        <dbReference type="ChEBI" id="CHEBI:29105"/>
    </cofactor>
    <text evidence="1">Binds 1 zinc ion per subunit.</text>
</comment>
<comment type="subunit">
    <text evidence="1">Homodimer. Interacts with adenosine receptors. Binds heparin (By similarity).</text>
</comment>
<comment type="subcellular location">
    <subcellularLocation>
        <location evidence="1">Secreted</location>
    </subcellularLocation>
</comment>
<comment type="domain">
    <text evidence="1">The PRB domain is involved in receptor binding, and may be responsible for the cytokine-like growth factor activity due to it's sharing of several structural properties with chemokines.</text>
</comment>
<comment type="domain">
    <text evidence="1">High-affinity binding to heparin/glycosaminoclycan (GAG) is mediated by a large, highly positively charged surface at the interface of dimer's subunits involving approximately residues 30-45, 389-396, and 422-428.</text>
</comment>
<comment type="similarity">
    <text evidence="4">Belongs to the metallo-dependent hydrolases superfamily. Adenosine and AMP deaminases family. ADGF subfamily.</text>
</comment>
<organism>
    <name type="scientific">Pongo abelii</name>
    <name type="common">Sumatran orangutan</name>
    <name type="synonym">Pongo pygmaeus abelii</name>
    <dbReference type="NCBI Taxonomy" id="9601"/>
    <lineage>
        <taxon>Eukaryota</taxon>
        <taxon>Metazoa</taxon>
        <taxon>Chordata</taxon>
        <taxon>Craniata</taxon>
        <taxon>Vertebrata</taxon>
        <taxon>Euteleostomi</taxon>
        <taxon>Mammalia</taxon>
        <taxon>Eutheria</taxon>
        <taxon>Euarchontoglires</taxon>
        <taxon>Primates</taxon>
        <taxon>Haplorrhini</taxon>
        <taxon>Catarrhini</taxon>
        <taxon>Hominidae</taxon>
        <taxon>Pongo</taxon>
    </lineage>
</organism>
<dbReference type="EC" id="3.5.4.4" evidence="2"/>
<dbReference type="EMBL" id="CR858435">
    <property type="protein sequence ID" value="CAH90664.1"/>
    <property type="molecule type" value="mRNA"/>
</dbReference>
<dbReference type="RefSeq" id="NP_001125360.1">
    <property type="nucleotide sequence ID" value="NM_001131888.2"/>
</dbReference>
<dbReference type="SMR" id="Q5RC46"/>
<dbReference type="FunCoup" id="Q5RC46">
    <property type="interactions" value="168"/>
</dbReference>
<dbReference type="STRING" id="9601.ENSPPYP00000022304"/>
<dbReference type="GlyCosmos" id="Q5RC46">
    <property type="glycosylation" value="4 sites, No reported glycans"/>
</dbReference>
<dbReference type="GeneID" id="100172262"/>
<dbReference type="KEGG" id="pon:100172262"/>
<dbReference type="CTD" id="51816"/>
<dbReference type="eggNOG" id="KOG1097">
    <property type="taxonomic scope" value="Eukaryota"/>
</dbReference>
<dbReference type="InParanoid" id="Q5RC46"/>
<dbReference type="OrthoDB" id="7202371at2759"/>
<dbReference type="Proteomes" id="UP000001595">
    <property type="component" value="Unplaced"/>
</dbReference>
<dbReference type="GO" id="GO:0005615">
    <property type="term" value="C:extracellular space"/>
    <property type="evidence" value="ECO:0000250"/>
    <property type="project" value="UniProtKB"/>
</dbReference>
<dbReference type="GO" id="GO:0004000">
    <property type="term" value="F:adenosine deaminase activity"/>
    <property type="evidence" value="ECO:0000250"/>
    <property type="project" value="UniProtKB"/>
</dbReference>
<dbReference type="GO" id="GO:0031685">
    <property type="term" value="F:adenosine receptor binding"/>
    <property type="evidence" value="ECO:0000250"/>
    <property type="project" value="UniProtKB"/>
</dbReference>
<dbReference type="GO" id="GO:0008201">
    <property type="term" value="F:heparin binding"/>
    <property type="evidence" value="ECO:0007669"/>
    <property type="project" value="UniProtKB-KW"/>
</dbReference>
<dbReference type="GO" id="GO:0043394">
    <property type="term" value="F:proteoglycan binding"/>
    <property type="evidence" value="ECO:0000250"/>
    <property type="project" value="UniProtKB"/>
</dbReference>
<dbReference type="GO" id="GO:0008270">
    <property type="term" value="F:zinc ion binding"/>
    <property type="evidence" value="ECO:0000250"/>
    <property type="project" value="UniProtKB"/>
</dbReference>
<dbReference type="GO" id="GO:0006154">
    <property type="term" value="P:adenosine catabolic process"/>
    <property type="evidence" value="ECO:0000250"/>
    <property type="project" value="UniProtKB"/>
</dbReference>
<dbReference type="GO" id="GO:0046103">
    <property type="term" value="P:inosine biosynthetic process"/>
    <property type="evidence" value="ECO:0007669"/>
    <property type="project" value="TreeGrafter"/>
</dbReference>
<dbReference type="CDD" id="cd01321">
    <property type="entry name" value="ADGF"/>
    <property type="match status" value="1"/>
</dbReference>
<dbReference type="FunFam" id="3.20.20.140:FF:000017">
    <property type="entry name" value="Adenosine deaminase 2"/>
    <property type="match status" value="1"/>
</dbReference>
<dbReference type="Gene3D" id="3.20.20.140">
    <property type="entry name" value="Metal-dependent hydrolases"/>
    <property type="match status" value="1"/>
</dbReference>
<dbReference type="InterPro" id="IPR001365">
    <property type="entry name" value="A_deaminase_dom"/>
</dbReference>
<dbReference type="InterPro" id="IPR013659">
    <property type="entry name" value="A_deaminase_N"/>
</dbReference>
<dbReference type="InterPro" id="IPR006331">
    <property type="entry name" value="ADGF"/>
</dbReference>
<dbReference type="InterPro" id="IPR006330">
    <property type="entry name" value="Ado/ade_deaminase"/>
</dbReference>
<dbReference type="InterPro" id="IPR032466">
    <property type="entry name" value="Metal_Hydrolase"/>
</dbReference>
<dbReference type="NCBIfam" id="TIGR01431">
    <property type="entry name" value="adm_rel"/>
    <property type="match status" value="1"/>
</dbReference>
<dbReference type="PANTHER" id="PTHR11409">
    <property type="entry name" value="ADENOSINE DEAMINASE"/>
    <property type="match status" value="1"/>
</dbReference>
<dbReference type="PANTHER" id="PTHR11409:SF39">
    <property type="entry name" value="ADENOSINE DEAMINASE 2"/>
    <property type="match status" value="1"/>
</dbReference>
<dbReference type="Pfam" id="PF00962">
    <property type="entry name" value="A_deaminase"/>
    <property type="match status" value="1"/>
</dbReference>
<dbReference type="Pfam" id="PF08451">
    <property type="entry name" value="A_deaminase_N"/>
    <property type="match status" value="1"/>
</dbReference>
<dbReference type="SUPFAM" id="SSF51556">
    <property type="entry name" value="Metallo-dependent hydrolases"/>
    <property type="match status" value="1"/>
</dbReference>
<evidence type="ECO:0000250" key="1"/>
<evidence type="ECO:0000250" key="2">
    <source>
        <dbReference type="UniProtKB" id="Q9NZK5"/>
    </source>
</evidence>
<evidence type="ECO:0000255" key="3"/>
<evidence type="ECO:0000305" key="4"/>
<sequence>MLVDGPSEWPALRFLLLAVAMSFFGSALSIDETRAHLLLKEKMMRLGGRLVLNTKEEQANERLMMLKIAEMKEAMRTLIFPPSMHFFQAKHLIERSQVFNILRMMPKGAALHLHDIGIVTMDWLVRNVTYRPHCHICFTPKGIMQFRFAHPTPRTSEKCSKWILLEDYRKRVQNVTEFDDSLLRNFTLVTQHPEVIYTNQNVVWSKFETIFFTISGLIHYAPVFRDYVFQSMQEFYEDNVLYMEIRARLLPVYELSGEHHDEEWSVKTYQEVAQKFVETHPEFIGIKIIYSDHRSKDVAVIAESIRTAMGLRTKFPTVVAGFDLVGREDTGHSLQDYKEALMIPAKGGVKLPYFFHAGETDWQGTSIDRNILDALMLNTTRIGHGFALSKHPAVRAYSWKKDIPIEVCPISNQVLKLVSDLRNHPVATLMATGHPMVISSDDPAIFGAKGLSYDFYEVFMGIGGMKADLRTLKQLAMNSIKYSALLEIEKNTFMEIWKKRWDKFIADVATK</sequence>
<feature type="signal peptide" evidence="3">
    <location>
        <begin position="1"/>
        <end position="29"/>
    </location>
</feature>
<feature type="chain" id="PRO_0000269717" description="Adenosine deaminase 2">
    <location>
        <begin position="30"/>
        <end position="511"/>
    </location>
</feature>
<feature type="region of interest" description="Dimerization" evidence="1">
    <location>
        <begin position="30"/>
        <end position="100"/>
    </location>
</feature>
<feature type="region of interest" description="PRB domain" evidence="1">
    <location>
        <begin position="127"/>
        <end position="185"/>
    </location>
</feature>
<feature type="active site" description="Proton donor" evidence="1">
    <location>
        <position position="359"/>
    </location>
</feature>
<feature type="active site" description="Proton acceptor" evidence="1">
    <location>
        <position position="384"/>
    </location>
</feature>
<feature type="binding site" evidence="1">
    <location>
        <position position="112"/>
    </location>
    <ligand>
        <name>Zn(2+)</name>
        <dbReference type="ChEBI" id="CHEBI:29105"/>
        <note>catalytic</note>
    </ligand>
</feature>
<feature type="binding site" evidence="1">
    <location>
        <position position="114"/>
    </location>
    <ligand>
        <name>Zn(2+)</name>
        <dbReference type="ChEBI" id="CHEBI:29105"/>
        <note>catalytic</note>
    </ligand>
</feature>
<feature type="binding site" evidence="1">
    <location>
        <position position="115"/>
    </location>
    <ligand>
        <name>substrate</name>
    </ligand>
</feature>
<feature type="binding site" evidence="1">
    <location>
        <begin position="204"/>
        <end position="211"/>
    </location>
    <ligand>
        <name>substrate</name>
    </ligand>
</feature>
<feature type="binding site" evidence="1">
    <location>
        <position position="293"/>
    </location>
    <ligand>
        <name>substrate</name>
    </ligand>
</feature>
<feature type="binding site" evidence="1">
    <location>
        <position position="326"/>
    </location>
    <ligand>
        <name>substrate</name>
    </ligand>
</feature>
<feature type="binding site" evidence="1">
    <location>
        <position position="356"/>
    </location>
    <ligand>
        <name>Zn(2+)</name>
        <dbReference type="ChEBI" id="CHEBI:29105"/>
        <note>catalytic</note>
    </ligand>
</feature>
<feature type="binding site" evidence="1">
    <location>
        <position position="441"/>
    </location>
    <ligand>
        <name>Zn(2+)</name>
        <dbReference type="ChEBI" id="CHEBI:29105"/>
        <note>catalytic</note>
    </ligand>
</feature>
<feature type="binding site" evidence="1">
    <location>
        <position position="442"/>
    </location>
    <ligand>
        <name>substrate</name>
    </ligand>
</feature>
<feature type="glycosylation site" description="N-linked (GlcNAc...) asparagine" evidence="3">
    <location>
        <position position="127"/>
    </location>
</feature>
<feature type="glycosylation site" description="N-linked (GlcNAc...) asparagine" evidence="3">
    <location>
        <position position="174"/>
    </location>
</feature>
<feature type="glycosylation site" description="N-linked (GlcNAc...) asparagine" evidence="3">
    <location>
        <position position="185"/>
    </location>
</feature>
<feature type="glycosylation site" description="N-linked (GlcNAc...) asparagine" evidence="3">
    <location>
        <position position="378"/>
    </location>
</feature>
<feature type="disulfide bond" evidence="1">
    <location>
        <begin position="137"/>
        <end position="159"/>
    </location>
</feature>
<gene>
    <name evidence="2" type="primary">ADA2</name>
    <name type="synonym">CECR1</name>
</gene>
<protein>
    <recommendedName>
        <fullName evidence="2">Adenosine deaminase 2</fullName>
        <ecNumber evidence="2">3.5.4.4</ecNumber>
    </recommendedName>
    <alternativeName>
        <fullName>Cat eye syndrome critical region protein 1</fullName>
    </alternativeName>
</protein>
<name>ADA2_PONAB</name>
<proteinExistence type="evidence at transcript level"/>
<accession>Q5RC46</accession>
<keyword id="KW-1015">Disulfide bond</keyword>
<keyword id="KW-0325">Glycoprotein</keyword>
<keyword id="KW-0358">Heparin-binding</keyword>
<keyword id="KW-0378">Hydrolase</keyword>
<keyword id="KW-0479">Metal-binding</keyword>
<keyword id="KW-1185">Reference proteome</keyword>
<keyword id="KW-0964">Secreted</keyword>
<keyword id="KW-0732">Signal</keyword>
<keyword id="KW-0862">Zinc</keyword>
<reference key="1">
    <citation type="submission" date="2004-11" db="EMBL/GenBank/DDBJ databases">
        <authorList>
            <consortium name="The German cDNA consortium"/>
        </authorList>
    </citation>
    <scope>NUCLEOTIDE SEQUENCE [LARGE SCALE MRNA]</scope>
    <source>
        <tissue>Kidney</tissue>
    </source>
</reference>